<dbReference type="EMBL" id="U00096">
    <property type="protein sequence ID" value="AAC74455.1"/>
    <property type="molecule type" value="Genomic_DNA"/>
</dbReference>
<dbReference type="EMBL" id="AP009048">
    <property type="protein sequence ID" value="BAA14978.1"/>
    <property type="molecule type" value="Genomic_DNA"/>
</dbReference>
<dbReference type="PIR" id="H64887">
    <property type="entry name" value="H64887"/>
</dbReference>
<dbReference type="RefSeq" id="NP_415891.1">
    <property type="nucleotide sequence ID" value="NC_000913.3"/>
</dbReference>
<dbReference type="RefSeq" id="WP_001698950.1">
    <property type="nucleotide sequence ID" value="NZ_CP064683.1"/>
</dbReference>
<dbReference type="BioGRID" id="4263523">
    <property type="interactions" value="91"/>
</dbReference>
<dbReference type="FunCoup" id="P77163">
    <property type="interactions" value="33"/>
</dbReference>
<dbReference type="STRING" id="511145.b1373"/>
<dbReference type="PaxDb" id="511145-b1373"/>
<dbReference type="EnsemblBacteria" id="AAC74455">
    <property type="protein sequence ID" value="AAC74455"/>
    <property type="gene ID" value="b1373"/>
</dbReference>
<dbReference type="GeneID" id="946062"/>
<dbReference type="KEGG" id="ecj:JW1367"/>
<dbReference type="KEGG" id="eco:b1373"/>
<dbReference type="KEGG" id="ecoc:C3026_08025"/>
<dbReference type="PATRIC" id="fig|511145.12.peg.1434"/>
<dbReference type="EchoBASE" id="EB3153"/>
<dbReference type="eggNOG" id="COG2110">
    <property type="taxonomic scope" value="Bacteria"/>
</dbReference>
<dbReference type="HOGENOM" id="CLU_094206_3_1_6"/>
<dbReference type="InParanoid" id="P77163"/>
<dbReference type="OMA" id="RIWALIN"/>
<dbReference type="OrthoDB" id="8596093at2"/>
<dbReference type="PhylomeDB" id="P77163"/>
<dbReference type="BioCyc" id="EcoCyc:G6696-MONOMER"/>
<dbReference type="PRO" id="PR:P77163"/>
<dbReference type="Proteomes" id="UP000000625">
    <property type="component" value="Chromosome"/>
</dbReference>
<dbReference type="InterPro" id="IPR003458">
    <property type="entry name" value="Phage_T4_Gp38_tail_assem"/>
</dbReference>
<dbReference type="InterPro" id="IPR051220">
    <property type="entry name" value="TFA_Chaperone"/>
</dbReference>
<dbReference type="PANTHER" id="PTHR34413:SF2">
    <property type="entry name" value="PROPHAGE TAIL FIBER ASSEMBLY PROTEIN HOMOLOG TFAE-RELATED"/>
    <property type="match status" value="1"/>
</dbReference>
<dbReference type="PANTHER" id="PTHR34413">
    <property type="entry name" value="PROPHAGE TAIL FIBER ASSEMBLY PROTEIN HOMOLOG TFAE-RELATED-RELATED"/>
    <property type="match status" value="1"/>
</dbReference>
<dbReference type="Pfam" id="PF02413">
    <property type="entry name" value="Caudo_TAP"/>
    <property type="match status" value="1"/>
</dbReference>
<reference key="1">
    <citation type="journal article" date="1996" name="DNA Res.">
        <title>A 570-kb DNA sequence of the Escherichia coli K-12 genome corresponding to the 28.0-40.1 min region on the linkage map.</title>
        <authorList>
            <person name="Aiba H."/>
            <person name="Baba T."/>
            <person name="Fujita K."/>
            <person name="Hayashi K."/>
            <person name="Inada T."/>
            <person name="Isono K."/>
            <person name="Itoh T."/>
            <person name="Kasai H."/>
            <person name="Kashimoto K."/>
            <person name="Kimura S."/>
            <person name="Kitakawa M."/>
            <person name="Kitagawa M."/>
            <person name="Makino K."/>
            <person name="Miki T."/>
            <person name="Mizobuchi K."/>
            <person name="Mori H."/>
            <person name="Mori T."/>
            <person name="Motomura K."/>
            <person name="Nakade S."/>
            <person name="Nakamura Y."/>
            <person name="Nashimoto H."/>
            <person name="Nishio Y."/>
            <person name="Oshima T."/>
            <person name="Saito N."/>
            <person name="Sampei G."/>
            <person name="Seki Y."/>
            <person name="Sivasundaram S."/>
            <person name="Tagami H."/>
            <person name="Takeda J."/>
            <person name="Takemoto K."/>
            <person name="Takeuchi Y."/>
            <person name="Wada C."/>
            <person name="Yamamoto Y."/>
            <person name="Horiuchi T."/>
        </authorList>
    </citation>
    <scope>NUCLEOTIDE SEQUENCE [LARGE SCALE GENOMIC DNA]</scope>
    <source>
        <strain>K12 / W3110 / ATCC 27325 / DSM 5911</strain>
    </source>
</reference>
<reference key="2">
    <citation type="journal article" date="1997" name="Science">
        <title>The complete genome sequence of Escherichia coli K-12.</title>
        <authorList>
            <person name="Blattner F.R."/>
            <person name="Plunkett G. III"/>
            <person name="Bloch C.A."/>
            <person name="Perna N.T."/>
            <person name="Burland V."/>
            <person name="Riley M."/>
            <person name="Collado-Vides J."/>
            <person name="Glasner J.D."/>
            <person name="Rode C.K."/>
            <person name="Mayhew G.F."/>
            <person name="Gregor J."/>
            <person name="Davis N.W."/>
            <person name="Kirkpatrick H.A."/>
            <person name="Goeden M.A."/>
            <person name="Rose D.J."/>
            <person name="Mau B."/>
            <person name="Shao Y."/>
        </authorList>
    </citation>
    <scope>NUCLEOTIDE SEQUENCE [LARGE SCALE GENOMIC DNA]</scope>
    <source>
        <strain>K12 / MG1655 / ATCC 47076</strain>
    </source>
</reference>
<reference key="3">
    <citation type="journal article" date="2006" name="Mol. Syst. Biol.">
        <title>Highly accurate genome sequences of Escherichia coli K-12 strains MG1655 and W3110.</title>
        <authorList>
            <person name="Hayashi K."/>
            <person name="Morooka N."/>
            <person name="Yamamoto Y."/>
            <person name="Fujita K."/>
            <person name="Isono K."/>
            <person name="Choi S."/>
            <person name="Ohtsubo E."/>
            <person name="Baba T."/>
            <person name="Wanner B.L."/>
            <person name="Mori H."/>
            <person name="Horiuchi T."/>
        </authorList>
    </citation>
    <scope>NUCLEOTIDE SEQUENCE [LARGE SCALE GENOMIC DNA]</scope>
    <source>
        <strain>K12 / W3110 / ATCC 27325 / DSM 5911</strain>
    </source>
</reference>
<protein>
    <recommendedName>
        <fullName evidence="1">Prophage tail fiber assembly protein homolog TfaR</fullName>
    </recommendedName>
    <alternativeName>
        <fullName>Tail fiber assembly protein homolog from lambdoid prophage Rac</fullName>
    </alternativeName>
</protein>
<organism>
    <name type="scientific">Escherichia coli (strain K12)</name>
    <dbReference type="NCBI Taxonomy" id="83333"/>
    <lineage>
        <taxon>Bacteria</taxon>
        <taxon>Pseudomonadati</taxon>
        <taxon>Pseudomonadota</taxon>
        <taxon>Gammaproteobacteria</taxon>
        <taxon>Enterobacterales</taxon>
        <taxon>Enterobacteriaceae</taxon>
        <taxon>Escherichia</taxon>
    </lineage>
</organism>
<comment type="similarity">
    <text evidence="1">Belongs to the tfa family.</text>
</comment>
<keyword id="KW-1185">Reference proteome</keyword>
<accession>P77163</accession>
<accession>P76852</accession>
<accession>P76885</accession>
<feature type="chain" id="PRO_0000070307" description="Prophage tail fiber assembly protein homolog TfaR">
    <location>
        <begin position="1"/>
        <end position="191"/>
    </location>
</feature>
<gene>
    <name type="primary">tfaR</name>
    <name type="synonym">ynaC</name>
    <name type="ordered locus">b1373</name>
    <name type="ordered locus">JW1367</name>
</gene>
<sequence>MAFRMSEQPRTIKIYNLLAGTNEFIGEGDAYIPPHTGLPANSTDIAPPDIPAGFVAVFNSDESSWHLVEDHRGKTVYDVASGNALFISELGPLPENVTWLSPEGEFQKWNGTAWVKDTEAEKLFRIREAEETKNNLMQVASEHIAPLQDAADLEIATEEEISLLEAWKKYRVLLNRVDTSTAQDIEWPALP</sequence>
<proteinExistence type="inferred from homology"/>
<name>TFAR_ECOLI</name>
<evidence type="ECO:0000305" key="1"/>